<reference key="1">
    <citation type="submission" date="2004-11" db="EMBL/GenBank/DDBJ databases">
        <title>Complete genome sequence of Thermus thermophilus HB8.</title>
        <authorList>
            <person name="Masui R."/>
            <person name="Kurokawa K."/>
            <person name="Nakagawa N."/>
            <person name="Tokunaga F."/>
            <person name="Koyama Y."/>
            <person name="Shibata T."/>
            <person name="Oshima T."/>
            <person name="Yokoyama S."/>
            <person name="Yasunaga T."/>
            <person name="Kuramitsu S."/>
        </authorList>
    </citation>
    <scope>NUCLEOTIDE SEQUENCE [LARGE SCALE GENOMIC DNA]</scope>
    <source>
        <strain>ATCC 27634 / DSM 579 / HB8</strain>
    </source>
</reference>
<protein>
    <recommendedName>
        <fullName evidence="1">Acetyl-coenzyme A carboxylase carboxyl transferase subunit alpha</fullName>
        <shortName evidence="1">ACCase subunit alpha</shortName>
        <shortName evidence="1">Acetyl-CoA carboxylase carboxyltransferase subunit alpha</shortName>
        <ecNumber evidence="1">2.1.3.15</ecNumber>
    </recommendedName>
</protein>
<keyword id="KW-0067">ATP-binding</keyword>
<keyword id="KW-0963">Cytoplasm</keyword>
<keyword id="KW-0275">Fatty acid biosynthesis</keyword>
<keyword id="KW-0276">Fatty acid metabolism</keyword>
<keyword id="KW-0444">Lipid biosynthesis</keyword>
<keyword id="KW-0443">Lipid metabolism</keyword>
<keyword id="KW-0547">Nucleotide-binding</keyword>
<keyword id="KW-1185">Reference proteome</keyword>
<keyword id="KW-0808">Transferase</keyword>
<feature type="chain" id="PRO_0000223844" description="Acetyl-coenzyme A carboxylase carboxyl transferase subunit alpha">
    <location>
        <begin position="1"/>
        <end position="316"/>
    </location>
</feature>
<feature type="domain" description="CoA carboxyltransferase C-terminal" evidence="2">
    <location>
        <begin position="36"/>
        <end position="290"/>
    </location>
</feature>
<gene>
    <name evidence="1" type="primary">accA</name>
    <name type="ordered locus">TTHA1767</name>
</gene>
<organism>
    <name type="scientific">Thermus thermophilus (strain ATCC 27634 / DSM 579 / HB8)</name>
    <dbReference type="NCBI Taxonomy" id="300852"/>
    <lineage>
        <taxon>Bacteria</taxon>
        <taxon>Thermotogati</taxon>
        <taxon>Deinococcota</taxon>
        <taxon>Deinococci</taxon>
        <taxon>Thermales</taxon>
        <taxon>Thermaceae</taxon>
        <taxon>Thermus</taxon>
    </lineage>
</organism>
<proteinExistence type="inferred from homology"/>
<accession>Q5SHG3</accession>
<comment type="function">
    <text evidence="1">Component of the acetyl coenzyme A carboxylase (ACC) complex. First, biotin carboxylase catalyzes the carboxylation of biotin on its carrier protein (BCCP) and then the CO(2) group is transferred by the carboxyltransferase to acetyl-CoA to form malonyl-CoA.</text>
</comment>
<comment type="catalytic activity">
    <reaction evidence="1">
        <text>N(6)-carboxybiotinyl-L-lysyl-[protein] + acetyl-CoA = N(6)-biotinyl-L-lysyl-[protein] + malonyl-CoA</text>
        <dbReference type="Rhea" id="RHEA:54728"/>
        <dbReference type="Rhea" id="RHEA-COMP:10505"/>
        <dbReference type="Rhea" id="RHEA-COMP:10506"/>
        <dbReference type="ChEBI" id="CHEBI:57288"/>
        <dbReference type="ChEBI" id="CHEBI:57384"/>
        <dbReference type="ChEBI" id="CHEBI:83144"/>
        <dbReference type="ChEBI" id="CHEBI:83145"/>
        <dbReference type="EC" id="2.1.3.15"/>
    </reaction>
</comment>
<comment type="pathway">
    <text evidence="1">Lipid metabolism; malonyl-CoA biosynthesis; malonyl-CoA from acetyl-CoA: step 1/1.</text>
</comment>
<comment type="subunit">
    <text evidence="1">Acetyl-CoA carboxylase is a heterohexamer composed of biotin carboxyl carrier protein (AccB), biotin carboxylase (AccC) and two subunits each of ACCase subunit alpha (AccA) and ACCase subunit beta (AccD).</text>
</comment>
<comment type="subcellular location">
    <subcellularLocation>
        <location evidence="1">Cytoplasm</location>
    </subcellularLocation>
</comment>
<comment type="similarity">
    <text evidence="1">Belongs to the AccA family.</text>
</comment>
<name>ACCA_THET8</name>
<evidence type="ECO:0000255" key="1">
    <source>
        <dbReference type="HAMAP-Rule" id="MF_00823"/>
    </source>
</evidence>
<evidence type="ECO:0000255" key="2">
    <source>
        <dbReference type="PROSITE-ProRule" id="PRU01137"/>
    </source>
</evidence>
<dbReference type="EC" id="2.1.3.15" evidence="1"/>
<dbReference type="EMBL" id="AP008226">
    <property type="protein sequence ID" value="BAD71590.1"/>
    <property type="molecule type" value="Genomic_DNA"/>
</dbReference>
<dbReference type="RefSeq" id="WP_011228903.1">
    <property type="nucleotide sequence ID" value="NC_006461.1"/>
</dbReference>
<dbReference type="RefSeq" id="YP_145033.1">
    <property type="nucleotide sequence ID" value="NC_006461.1"/>
</dbReference>
<dbReference type="SMR" id="Q5SHG3"/>
<dbReference type="EnsemblBacteria" id="BAD71590">
    <property type="protein sequence ID" value="BAD71590"/>
    <property type="gene ID" value="BAD71590"/>
</dbReference>
<dbReference type="GeneID" id="3168755"/>
<dbReference type="KEGG" id="ttj:TTHA1767"/>
<dbReference type="PATRIC" id="fig|300852.9.peg.1737"/>
<dbReference type="eggNOG" id="COG0825">
    <property type="taxonomic scope" value="Bacteria"/>
</dbReference>
<dbReference type="HOGENOM" id="CLU_015486_0_2_0"/>
<dbReference type="PhylomeDB" id="Q5SHG3"/>
<dbReference type="UniPathway" id="UPA00655">
    <property type="reaction ID" value="UER00711"/>
</dbReference>
<dbReference type="Proteomes" id="UP000000532">
    <property type="component" value="Chromosome"/>
</dbReference>
<dbReference type="GO" id="GO:0009317">
    <property type="term" value="C:acetyl-CoA carboxylase complex"/>
    <property type="evidence" value="ECO:0007669"/>
    <property type="project" value="InterPro"/>
</dbReference>
<dbReference type="GO" id="GO:0003989">
    <property type="term" value="F:acetyl-CoA carboxylase activity"/>
    <property type="evidence" value="ECO:0007669"/>
    <property type="project" value="InterPro"/>
</dbReference>
<dbReference type="GO" id="GO:0005524">
    <property type="term" value="F:ATP binding"/>
    <property type="evidence" value="ECO:0007669"/>
    <property type="project" value="UniProtKB-KW"/>
</dbReference>
<dbReference type="GO" id="GO:0016743">
    <property type="term" value="F:carboxyl- or carbamoyltransferase activity"/>
    <property type="evidence" value="ECO:0007669"/>
    <property type="project" value="UniProtKB-UniRule"/>
</dbReference>
<dbReference type="GO" id="GO:0006633">
    <property type="term" value="P:fatty acid biosynthetic process"/>
    <property type="evidence" value="ECO:0007669"/>
    <property type="project" value="UniProtKB-KW"/>
</dbReference>
<dbReference type="GO" id="GO:2001295">
    <property type="term" value="P:malonyl-CoA biosynthetic process"/>
    <property type="evidence" value="ECO:0007669"/>
    <property type="project" value="UniProtKB-UniRule"/>
</dbReference>
<dbReference type="Gene3D" id="3.90.226.10">
    <property type="entry name" value="2-enoyl-CoA Hydratase, Chain A, domain 1"/>
    <property type="match status" value="1"/>
</dbReference>
<dbReference type="HAMAP" id="MF_00823">
    <property type="entry name" value="AcetylCoA_CT_alpha"/>
    <property type="match status" value="1"/>
</dbReference>
<dbReference type="InterPro" id="IPR001095">
    <property type="entry name" value="Acetyl_CoA_COase_a_su"/>
</dbReference>
<dbReference type="InterPro" id="IPR029045">
    <property type="entry name" value="ClpP/crotonase-like_dom_sf"/>
</dbReference>
<dbReference type="InterPro" id="IPR011763">
    <property type="entry name" value="COA_CT_C"/>
</dbReference>
<dbReference type="NCBIfam" id="TIGR00513">
    <property type="entry name" value="accA"/>
    <property type="match status" value="1"/>
</dbReference>
<dbReference type="NCBIfam" id="NF041504">
    <property type="entry name" value="AccA_sub"/>
    <property type="match status" value="1"/>
</dbReference>
<dbReference type="NCBIfam" id="NF004344">
    <property type="entry name" value="PRK05724.1"/>
    <property type="match status" value="1"/>
</dbReference>
<dbReference type="PANTHER" id="PTHR42853">
    <property type="entry name" value="ACETYL-COENZYME A CARBOXYLASE CARBOXYL TRANSFERASE SUBUNIT ALPHA"/>
    <property type="match status" value="1"/>
</dbReference>
<dbReference type="PANTHER" id="PTHR42853:SF3">
    <property type="entry name" value="ACETYL-COENZYME A CARBOXYLASE CARBOXYL TRANSFERASE SUBUNIT ALPHA, CHLOROPLASTIC"/>
    <property type="match status" value="1"/>
</dbReference>
<dbReference type="Pfam" id="PF03255">
    <property type="entry name" value="ACCA"/>
    <property type="match status" value="1"/>
</dbReference>
<dbReference type="PRINTS" id="PR01069">
    <property type="entry name" value="ACCCTRFRASEA"/>
</dbReference>
<dbReference type="SUPFAM" id="SSF52096">
    <property type="entry name" value="ClpP/crotonase"/>
    <property type="match status" value="1"/>
</dbReference>
<dbReference type="PROSITE" id="PS50989">
    <property type="entry name" value="COA_CT_CTER"/>
    <property type="match status" value="1"/>
</dbReference>
<sequence length="316" mass="35178">MPLEFEKPILELERRIAELKETAKATGVDLEAEIRLLEERLARLRKETYENLTPWQRVQLARASGRPTTLDVLEKAFQDFIELHGDRAFADDPAIVGGLAYLEGEKVVVVGHQKGRDTKENLQRNFGMPHPEGYRKAMRLMDLADRFGYPFLTFVDTPGAYPGVSAEERGQAWVIAQSIQRMSRLRVPAVTVILGEGGSGGALAIAVANRVLILENAWYSVISPESCAAILWRDAKEAPKAAEALKLTAKDLLQLKVVDAIVPEPEGGAHKDPDRAIRNIKEALLKALEELKGLSPEALYEDRYRRFRSLGAFAEP</sequence>